<name>SC5A4_RAT</name>
<comment type="function">
    <text evidence="4">Generates D-glucose-induced depolarization in a pH-dependent and Na(+)-independent manner, with activity in acidic conditions (pH 5) but not neutral conditions.</text>
</comment>
<comment type="subcellular location">
    <subcellularLocation>
        <location evidence="1">Cell membrane</location>
        <topology evidence="2">Multi-pass membrane protein</topology>
    </subcellularLocation>
</comment>
<comment type="similarity">
    <text evidence="5">Belongs to the sodium:solute symporter (SSF) (TC 2.A.21) family.</text>
</comment>
<accession>D3ZIS0</accession>
<accession>M0RBI9</accession>
<organism>
    <name type="scientific">Rattus norvegicus</name>
    <name type="common">Rat</name>
    <dbReference type="NCBI Taxonomy" id="10116"/>
    <lineage>
        <taxon>Eukaryota</taxon>
        <taxon>Metazoa</taxon>
        <taxon>Chordata</taxon>
        <taxon>Craniata</taxon>
        <taxon>Vertebrata</taxon>
        <taxon>Euteleostomi</taxon>
        <taxon>Mammalia</taxon>
        <taxon>Eutheria</taxon>
        <taxon>Euarchontoglires</taxon>
        <taxon>Glires</taxon>
        <taxon>Rodentia</taxon>
        <taxon>Myomorpha</taxon>
        <taxon>Muroidea</taxon>
        <taxon>Muridae</taxon>
        <taxon>Murinae</taxon>
        <taxon>Rattus</taxon>
    </lineage>
</organism>
<protein>
    <recommendedName>
        <fullName evidence="5">Solute carrier family 5 member 4</fullName>
    </recommendedName>
</protein>
<gene>
    <name evidence="6" type="primary">Slc5a4</name>
</gene>
<reference key="1">
    <citation type="journal article" date="2004" name="Nature">
        <title>Genome sequence of the Brown Norway rat yields insights into mammalian evolution.</title>
        <authorList>
            <person name="Gibbs R.A."/>
            <person name="Weinstock G.M."/>
            <person name="Metzker M.L."/>
            <person name="Muzny D.M."/>
            <person name="Sodergren E.J."/>
            <person name="Scherer S."/>
            <person name="Scott G."/>
            <person name="Steffen D."/>
            <person name="Worley K.C."/>
            <person name="Burch P.E."/>
            <person name="Okwuonu G."/>
            <person name="Hines S."/>
            <person name="Lewis L."/>
            <person name="Deramo C."/>
            <person name="Delgado O."/>
            <person name="Dugan-Rocha S."/>
            <person name="Miner G."/>
            <person name="Morgan M."/>
            <person name="Hawes A."/>
            <person name="Gill R."/>
            <person name="Holt R.A."/>
            <person name="Adams M.D."/>
            <person name="Amanatides P.G."/>
            <person name="Baden-Tillson H."/>
            <person name="Barnstead M."/>
            <person name="Chin S."/>
            <person name="Evans C.A."/>
            <person name="Ferriera S."/>
            <person name="Fosler C."/>
            <person name="Glodek A."/>
            <person name="Gu Z."/>
            <person name="Jennings D."/>
            <person name="Kraft C.L."/>
            <person name="Nguyen T."/>
            <person name="Pfannkoch C.M."/>
            <person name="Sitter C."/>
            <person name="Sutton G.G."/>
            <person name="Venter J.C."/>
            <person name="Woodage T."/>
            <person name="Smith D."/>
            <person name="Lee H.-M."/>
            <person name="Gustafson E."/>
            <person name="Cahill P."/>
            <person name="Kana A."/>
            <person name="Doucette-Stamm L."/>
            <person name="Weinstock K."/>
            <person name="Fechtel K."/>
            <person name="Weiss R.B."/>
            <person name="Dunn D.M."/>
            <person name="Green E.D."/>
            <person name="Blakesley R.W."/>
            <person name="Bouffard G.G."/>
            <person name="De Jong P.J."/>
            <person name="Osoegawa K."/>
            <person name="Zhu B."/>
            <person name="Marra M."/>
            <person name="Schein J."/>
            <person name="Bosdet I."/>
            <person name="Fjell C."/>
            <person name="Jones S."/>
            <person name="Krzywinski M."/>
            <person name="Mathewson C."/>
            <person name="Siddiqui A."/>
            <person name="Wye N."/>
            <person name="McPherson J."/>
            <person name="Zhao S."/>
            <person name="Fraser C.M."/>
            <person name="Shetty J."/>
            <person name="Shatsman S."/>
            <person name="Geer K."/>
            <person name="Chen Y."/>
            <person name="Abramzon S."/>
            <person name="Nierman W.C."/>
            <person name="Havlak P.H."/>
            <person name="Chen R."/>
            <person name="Durbin K.J."/>
            <person name="Egan A."/>
            <person name="Ren Y."/>
            <person name="Song X.-Z."/>
            <person name="Li B."/>
            <person name="Liu Y."/>
            <person name="Qin X."/>
            <person name="Cawley S."/>
            <person name="Cooney A.J."/>
            <person name="D'Souza L.M."/>
            <person name="Martin K."/>
            <person name="Wu J.Q."/>
            <person name="Gonzalez-Garay M.L."/>
            <person name="Jackson A.R."/>
            <person name="Kalafus K.J."/>
            <person name="McLeod M.P."/>
            <person name="Milosavljevic A."/>
            <person name="Virk D."/>
            <person name="Volkov A."/>
            <person name="Wheeler D.A."/>
            <person name="Zhang Z."/>
            <person name="Bailey J.A."/>
            <person name="Eichler E.E."/>
            <person name="Tuzun E."/>
            <person name="Birney E."/>
            <person name="Mongin E."/>
            <person name="Ureta-Vidal A."/>
            <person name="Woodwark C."/>
            <person name="Zdobnov E."/>
            <person name="Bork P."/>
            <person name="Suyama M."/>
            <person name="Torrents D."/>
            <person name="Alexandersson M."/>
            <person name="Trask B.J."/>
            <person name="Young J.M."/>
            <person name="Huang H."/>
            <person name="Wang H."/>
            <person name="Xing H."/>
            <person name="Daniels S."/>
            <person name="Gietzen D."/>
            <person name="Schmidt J."/>
            <person name="Stevens K."/>
            <person name="Vitt U."/>
            <person name="Wingrove J."/>
            <person name="Camara F."/>
            <person name="Mar Alba M."/>
            <person name="Abril J.F."/>
            <person name="Guigo R."/>
            <person name="Smit A."/>
            <person name="Dubchak I."/>
            <person name="Rubin E.M."/>
            <person name="Couronne O."/>
            <person name="Poliakov A."/>
            <person name="Huebner N."/>
            <person name="Ganten D."/>
            <person name="Goesele C."/>
            <person name="Hummel O."/>
            <person name="Kreitler T."/>
            <person name="Lee Y.-A."/>
            <person name="Monti J."/>
            <person name="Schulz H."/>
            <person name="Zimdahl H."/>
            <person name="Himmelbauer H."/>
            <person name="Lehrach H."/>
            <person name="Jacob H.J."/>
            <person name="Bromberg S."/>
            <person name="Gullings-Handley J."/>
            <person name="Jensen-Seaman M.I."/>
            <person name="Kwitek A.E."/>
            <person name="Lazar J."/>
            <person name="Pasko D."/>
            <person name="Tonellato P.J."/>
            <person name="Twigger S."/>
            <person name="Ponting C.P."/>
            <person name="Duarte J.M."/>
            <person name="Rice S."/>
            <person name="Goodstadt L."/>
            <person name="Beatson S.A."/>
            <person name="Emes R.D."/>
            <person name="Winter E.E."/>
            <person name="Webber C."/>
            <person name="Brandt P."/>
            <person name="Nyakatura G."/>
            <person name="Adetobi M."/>
            <person name="Chiaromonte F."/>
            <person name="Elnitski L."/>
            <person name="Eswara P."/>
            <person name="Hardison R.C."/>
            <person name="Hou M."/>
            <person name="Kolbe D."/>
            <person name="Makova K."/>
            <person name="Miller W."/>
            <person name="Nekrutenko A."/>
            <person name="Riemer C."/>
            <person name="Schwartz S."/>
            <person name="Taylor J."/>
            <person name="Yang S."/>
            <person name="Zhang Y."/>
            <person name="Lindpaintner K."/>
            <person name="Andrews T.D."/>
            <person name="Caccamo M."/>
            <person name="Clamp M."/>
            <person name="Clarke L."/>
            <person name="Curwen V."/>
            <person name="Durbin R.M."/>
            <person name="Eyras E."/>
            <person name="Searle S.M."/>
            <person name="Cooper G.M."/>
            <person name="Batzoglou S."/>
            <person name="Brudno M."/>
            <person name="Sidow A."/>
            <person name="Stone E.A."/>
            <person name="Payseur B.A."/>
            <person name="Bourque G."/>
            <person name="Lopez-Otin C."/>
            <person name="Puente X.S."/>
            <person name="Chakrabarti K."/>
            <person name="Chatterji S."/>
            <person name="Dewey C."/>
            <person name="Pachter L."/>
            <person name="Bray N."/>
            <person name="Yap V.B."/>
            <person name="Caspi A."/>
            <person name="Tesler G."/>
            <person name="Pevzner P.A."/>
            <person name="Haussler D."/>
            <person name="Roskin K.M."/>
            <person name="Baertsch R."/>
            <person name="Clawson H."/>
            <person name="Furey T.S."/>
            <person name="Hinrichs A.S."/>
            <person name="Karolchik D."/>
            <person name="Kent W.J."/>
            <person name="Rosenbloom K.R."/>
            <person name="Trumbower H."/>
            <person name="Weirauch M."/>
            <person name="Cooper D.N."/>
            <person name="Stenson P.D."/>
            <person name="Ma B."/>
            <person name="Brent M."/>
            <person name="Arumugam M."/>
            <person name="Shteynberg D."/>
            <person name="Copley R.R."/>
            <person name="Taylor M.S."/>
            <person name="Riethman H."/>
            <person name="Mudunuri U."/>
            <person name="Peterson J."/>
            <person name="Guyer M."/>
            <person name="Felsenfeld A."/>
            <person name="Old S."/>
            <person name="Mockrin S."/>
            <person name="Collins F.S."/>
        </authorList>
    </citation>
    <scope>NUCLEOTIDE SEQUENCE [LARGE SCALE GENOMIC DNA]</scope>
    <source>
        <strain>Brown Norway</strain>
    </source>
</reference>
<reference key="2">
    <citation type="journal article" date="2012" name="Am. J. Physiol.">
        <title>Mouse SGLT3a generates proton-activated currents but does not transport sugar.</title>
        <authorList>
            <person name="Barcelona S."/>
            <person name="Menegaz D."/>
            <person name="Diez-Sampedro A."/>
        </authorList>
    </citation>
    <scope>FUNCTION</scope>
</reference>
<proteinExistence type="inferred from homology"/>
<evidence type="ECO:0000250" key="1">
    <source>
        <dbReference type="UniProtKB" id="Q9ET37"/>
    </source>
</evidence>
<evidence type="ECO:0000255" key="2"/>
<evidence type="ECO:0000256" key="3">
    <source>
        <dbReference type="SAM" id="MobiDB-lite"/>
    </source>
</evidence>
<evidence type="ECO:0000269" key="4">
    <source>
    </source>
</evidence>
<evidence type="ECO:0000305" key="5"/>
<evidence type="ECO:0000312" key="6">
    <source>
        <dbReference type="RGD" id="1306923"/>
    </source>
</evidence>
<sequence length="671" mass="73578">MPAMGTALPRAMASTASVSTSTGSSELSSLSDNINNPADISVIVIYFVVVMAVGVWAMVKTNRSTVGGFFLAGRSMTWWPMGASLFASNIGSGHFVGLAGTGAATGIAVTAFESHSFALLLVLGWFFVPIYIKAGVMTMPEYLRKRFGGKRLQIYLSVLSLFICVILTISADIFSGAIFIKLALGLDLYLAIFILLAITAVFTITGGLASVIYTDTLQAIIMLVGSFILMIYAFVEVGGYESFTEKYMNAIPSVVEGDNLTISPKCYTPQPDSFHIFRDAVTGDIPWPGTAFGMPITALWYWCINQVIVQRCLCGKNMSHVKAACIVCGYLKLLPIFFMVMPGMISRILYTDMVACVVPSECVKQCGVDVGCTNYAYPMLVLKLMPMGLRGLMLSVMLASLMSSLTSIFNSASTLFTMDLYTKIRKKASERELLIAGRLFVSVLIVTSILWVPIVEVSQGGQLIHYTEAISSYLGPPIAAVFLVAIFCKRVNEQGAFWGLMVGLVLGLIRMIAEFSYGTGSCLAPSSCPKVICGVHYLYYAIILFFVSILVILGVSYLTKPIPDVHLYRLCWSLRNSEEERIDLDAEDREENEADARTEEDQTEKPRGCLKKTYDLCCGLQRAEPKLTKEEEEALKKKLTDTSEKPFWRTVVNVNVIVLLAVAAFFYGYFA</sequence>
<feature type="chain" id="PRO_0000458213" description="Solute carrier family 5 member 4">
    <location>
        <begin position="1"/>
        <end position="671"/>
    </location>
</feature>
<feature type="topological domain" description="Cytoplasmic" evidence="5">
    <location>
        <begin position="1"/>
        <end position="38"/>
    </location>
</feature>
<feature type="transmembrane region" description="Helical" evidence="2">
    <location>
        <begin position="39"/>
        <end position="59"/>
    </location>
</feature>
<feature type="topological domain" description="Extracellular" evidence="5">
    <location>
        <begin position="60"/>
        <end position="65"/>
    </location>
</feature>
<feature type="transmembrane region" description="Helical" evidence="2">
    <location>
        <begin position="66"/>
        <end position="86"/>
    </location>
</feature>
<feature type="topological domain" description="Cytoplasmic" evidence="5">
    <location>
        <begin position="87"/>
        <end position="89"/>
    </location>
</feature>
<feature type="transmembrane region" description="Helical" evidence="2">
    <location>
        <begin position="90"/>
        <end position="110"/>
    </location>
</feature>
<feature type="topological domain" description="Extracellular" evidence="5">
    <location>
        <begin position="111"/>
        <end position="116"/>
    </location>
</feature>
<feature type="transmembrane region" description="Helical" evidence="2">
    <location>
        <begin position="117"/>
        <end position="137"/>
    </location>
</feature>
<feature type="topological domain" description="Cytoplasmic" evidence="5">
    <location>
        <begin position="138"/>
        <end position="159"/>
    </location>
</feature>
<feature type="transmembrane region" description="Helical" evidence="2">
    <location>
        <begin position="160"/>
        <end position="180"/>
    </location>
</feature>
<feature type="topological domain" description="Extracellular" evidence="5">
    <location>
        <position position="181"/>
    </location>
</feature>
<feature type="transmembrane region" description="Helical" evidence="2">
    <location>
        <begin position="182"/>
        <end position="202"/>
    </location>
</feature>
<feature type="topological domain" description="Cytoplasmic" evidence="5">
    <location>
        <begin position="203"/>
        <end position="218"/>
    </location>
</feature>
<feature type="transmembrane region" description="Helical" evidence="2">
    <location>
        <begin position="219"/>
        <end position="239"/>
    </location>
</feature>
<feature type="topological domain" description="Extracellular" evidence="5">
    <location>
        <begin position="240"/>
        <end position="288"/>
    </location>
</feature>
<feature type="transmembrane region" description="Helical" evidence="2">
    <location>
        <begin position="289"/>
        <end position="309"/>
    </location>
</feature>
<feature type="topological domain" description="Cytoplasmic" evidence="5">
    <location>
        <begin position="310"/>
        <end position="324"/>
    </location>
</feature>
<feature type="transmembrane region" description="Helical" evidence="2">
    <location>
        <begin position="325"/>
        <end position="345"/>
    </location>
</feature>
<feature type="topological domain" description="Extracellular" evidence="5">
    <location>
        <begin position="346"/>
        <end position="378"/>
    </location>
</feature>
<feature type="transmembrane region" description="Helical" evidence="2">
    <location>
        <begin position="379"/>
        <end position="399"/>
    </location>
</feature>
<feature type="topological domain" description="Cytoplasmic" evidence="5">
    <location>
        <begin position="400"/>
        <end position="434"/>
    </location>
</feature>
<feature type="transmembrane region" description="Helical" evidence="2">
    <location>
        <begin position="435"/>
        <end position="455"/>
    </location>
</feature>
<feature type="topological domain" description="Extracellular" evidence="5">
    <location>
        <begin position="456"/>
        <end position="467"/>
    </location>
</feature>
<feature type="transmembrane region" description="Helical" evidence="2">
    <location>
        <begin position="468"/>
        <end position="488"/>
    </location>
</feature>
<feature type="topological domain" description="Cytoplasmic" evidence="5">
    <location>
        <begin position="489"/>
        <end position="494"/>
    </location>
</feature>
<feature type="transmembrane region" description="Helical" evidence="2">
    <location>
        <begin position="495"/>
        <end position="515"/>
    </location>
</feature>
<feature type="topological domain" description="Extracellular" evidence="5">
    <location>
        <begin position="516"/>
        <end position="537"/>
    </location>
</feature>
<feature type="transmembrane region" description="Helical" evidence="2">
    <location>
        <begin position="538"/>
        <end position="558"/>
    </location>
</feature>
<feature type="topological domain" description="Cytoplasmic" evidence="5">
    <location>
        <begin position="559"/>
        <end position="650"/>
    </location>
</feature>
<feature type="transmembrane region" description="Helical" evidence="2">
    <location>
        <begin position="651"/>
        <end position="671"/>
    </location>
</feature>
<feature type="region of interest" description="Disordered" evidence="3">
    <location>
        <begin position="583"/>
        <end position="604"/>
    </location>
</feature>
<feature type="compositionally biased region" description="Acidic residues" evidence="3">
    <location>
        <begin position="583"/>
        <end position="593"/>
    </location>
</feature>
<feature type="compositionally biased region" description="Basic and acidic residues" evidence="3">
    <location>
        <begin position="594"/>
        <end position="604"/>
    </location>
</feature>
<keyword id="KW-1003">Cell membrane</keyword>
<keyword id="KW-0472">Membrane</keyword>
<keyword id="KW-1185">Reference proteome</keyword>
<keyword id="KW-0812">Transmembrane</keyword>
<keyword id="KW-1133">Transmembrane helix</keyword>
<dbReference type="EMBL" id="AC125672">
    <property type="status" value="NOT_ANNOTATED_CDS"/>
    <property type="molecule type" value="Genomic_DNA"/>
</dbReference>
<dbReference type="RefSeq" id="NP_001099853.1">
    <property type="nucleotide sequence ID" value="NM_001106383.1"/>
</dbReference>
<dbReference type="SMR" id="D3ZIS0"/>
<dbReference type="FunCoup" id="D3ZIS0">
    <property type="interactions" value="6"/>
</dbReference>
<dbReference type="STRING" id="10116.ENSRNOP00000066926"/>
<dbReference type="PhosphoSitePlus" id="D3ZIS0"/>
<dbReference type="PaxDb" id="10116-ENSRNOP00000001750"/>
<dbReference type="Ensembl" id="ENSRNOT00000072183.3">
    <property type="protein sequence ID" value="ENSRNOP00000066926.2"/>
    <property type="gene ID" value="ENSRNOG00000049734.3"/>
</dbReference>
<dbReference type="GeneID" id="294341"/>
<dbReference type="KEGG" id="rno:294341"/>
<dbReference type="UCSC" id="RGD:1306923">
    <property type="organism name" value="rat"/>
</dbReference>
<dbReference type="AGR" id="RGD:1306923"/>
<dbReference type="CTD" id="6527"/>
<dbReference type="RGD" id="1306923">
    <property type="gene designation" value="Slc5a4"/>
</dbReference>
<dbReference type="eggNOG" id="KOG2349">
    <property type="taxonomic scope" value="Eukaryota"/>
</dbReference>
<dbReference type="GeneTree" id="ENSGT00940000160846"/>
<dbReference type="HOGENOM" id="CLU_018808_9_2_1"/>
<dbReference type="OMA" id="CVKHCGI"/>
<dbReference type="OrthoDB" id="6132759at2759"/>
<dbReference type="Reactome" id="R-RNO-189200">
    <property type="pathway name" value="Cellular hexose transport"/>
</dbReference>
<dbReference type="PRO" id="PR:D3ZIS0"/>
<dbReference type="Proteomes" id="UP000002494">
    <property type="component" value="Chromosome 20"/>
</dbReference>
<dbReference type="Bgee" id="ENSRNOG00000049734">
    <property type="expression patterns" value="Expressed in duodenum and 3 other cell types or tissues"/>
</dbReference>
<dbReference type="GO" id="GO:0005886">
    <property type="term" value="C:plasma membrane"/>
    <property type="evidence" value="ECO:0000318"/>
    <property type="project" value="GO_Central"/>
</dbReference>
<dbReference type="GO" id="GO:0005412">
    <property type="term" value="F:D-glucose:sodium symporter activity"/>
    <property type="evidence" value="ECO:0000266"/>
    <property type="project" value="RGD"/>
</dbReference>
<dbReference type="GO" id="GO:0005362">
    <property type="term" value="F:low-affinity D-glucose:sodium symporter activity"/>
    <property type="evidence" value="ECO:0000266"/>
    <property type="project" value="RGD"/>
</dbReference>
<dbReference type="GO" id="GO:0015078">
    <property type="term" value="F:proton transmembrane transporter activity"/>
    <property type="evidence" value="ECO:0000314"/>
    <property type="project" value="MGI"/>
</dbReference>
<dbReference type="GO" id="GO:1904659">
    <property type="term" value="P:D-glucose transmembrane transport"/>
    <property type="evidence" value="ECO:0000266"/>
    <property type="project" value="RGD"/>
</dbReference>
<dbReference type="GO" id="GO:1902600">
    <property type="term" value="P:proton transmembrane transport"/>
    <property type="evidence" value="ECO:0000314"/>
    <property type="project" value="MGI"/>
</dbReference>
<dbReference type="GO" id="GO:0006814">
    <property type="term" value="P:sodium ion transport"/>
    <property type="evidence" value="ECO:0000318"/>
    <property type="project" value="GO_Central"/>
</dbReference>
<dbReference type="FunFam" id="1.20.1730.10:FF:000005">
    <property type="entry name" value="sodium/glucose cotransporter 1 isoform X1"/>
    <property type="match status" value="1"/>
</dbReference>
<dbReference type="Gene3D" id="1.20.1730.10">
    <property type="entry name" value="Sodium/glucose cotransporter"/>
    <property type="match status" value="1"/>
</dbReference>
<dbReference type="InterPro" id="IPR038377">
    <property type="entry name" value="Na/Glc_symporter_sf"/>
</dbReference>
<dbReference type="InterPro" id="IPR001734">
    <property type="entry name" value="Na/solute_symporter"/>
</dbReference>
<dbReference type="InterPro" id="IPR018212">
    <property type="entry name" value="Na/solute_symporter_CS"/>
</dbReference>
<dbReference type="NCBIfam" id="TIGR00813">
    <property type="entry name" value="sss"/>
    <property type="match status" value="1"/>
</dbReference>
<dbReference type="PANTHER" id="PTHR11819:SF112">
    <property type="entry name" value="GLUCOSE SENSOR PROTEIN SLC5A4-RELATED"/>
    <property type="match status" value="1"/>
</dbReference>
<dbReference type="PANTHER" id="PTHR11819">
    <property type="entry name" value="SOLUTE CARRIER FAMILY 5"/>
    <property type="match status" value="1"/>
</dbReference>
<dbReference type="Pfam" id="PF00474">
    <property type="entry name" value="SSF"/>
    <property type="match status" value="1"/>
</dbReference>
<dbReference type="PROSITE" id="PS00457">
    <property type="entry name" value="NA_SOLUT_SYMP_2"/>
    <property type="match status" value="1"/>
</dbReference>
<dbReference type="PROSITE" id="PS50283">
    <property type="entry name" value="NA_SOLUT_SYMP_3"/>
    <property type="match status" value="1"/>
</dbReference>